<dbReference type="EMBL" id="DQ448820">
    <property type="protein sequence ID" value="ABE01880.1"/>
    <property type="molecule type" value="mRNA"/>
</dbReference>
<dbReference type="SMR" id="Q1W1G1"/>
<dbReference type="GeneID" id="734222"/>
<dbReference type="KEGG" id="xla:734222"/>
<dbReference type="AGR" id="Xenbase:XB-GENE-865275"/>
<dbReference type="CTD" id="734222"/>
<dbReference type="Xenbase" id="XB-GENE-865275">
    <property type="gene designation" value="nusap1.S"/>
</dbReference>
<dbReference type="OrthoDB" id="3258416at2759"/>
<dbReference type="Proteomes" id="UP000186698">
    <property type="component" value="Chromosome 8S"/>
</dbReference>
<dbReference type="Bgee" id="734222">
    <property type="expression patterns" value="Expressed in blastula and 14 other cell types or tissues"/>
</dbReference>
<dbReference type="GO" id="GO:0005737">
    <property type="term" value="C:cytoplasm"/>
    <property type="evidence" value="ECO:0007669"/>
    <property type="project" value="UniProtKB-SubCell"/>
</dbReference>
<dbReference type="GO" id="GO:0005874">
    <property type="term" value="C:microtubule"/>
    <property type="evidence" value="ECO:0007669"/>
    <property type="project" value="UniProtKB-KW"/>
</dbReference>
<dbReference type="GO" id="GO:0072686">
    <property type="term" value="C:mitotic spindle"/>
    <property type="evidence" value="ECO:0000318"/>
    <property type="project" value="GO_Central"/>
</dbReference>
<dbReference type="GO" id="GO:0005730">
    <property type="term" value="C:nucleolus"/>
    <property type="evidence" value="ECO:0000318"/>
    <property type="project" value="GO_Central"/>
</dbReference>
<dbReference type="GO" id="GO:0003677">
    <property type="term" value="F:DNA binding"/>
    <property type="evidence" value="ECO:0007669"/>
    <property type="project" value="UniProtKB-KW"/>
</dbReference>
<dbReference type="GO" id="GO:0008017">
    <property type="term" value="F:microtubule binding"/>
    <property type="evidence" value="ECO:0000318"/>
    <property type="project" value="GO_Central"/>
</dbReference>
<dbReference type="GO" id="GO:0040001">
    <property type="term" value="P:establishment of mitotic spindle localization"/>
    <property type="evidence" value="ECO:0000318"/>
    <property type="project" value="GO_Central"/>
</dbReference>
<dbReference type="GO" id="GO:0051321">
    <property type="term" value="P:meiotic cell cycle"/>
    <property type="evidence" value="ECO:0007669"/>
    <property type="project" value="UniProtKB-KW"/>
</dbReference>
<dbReference type="GO" id="GO:0007076">
    <property type="term" value="P:mitotic chromosome condensation"/>
    <property type="evidence" value="ECO:0000318"/>
    <property type="project" value="GO_Central"/>
</dbReference>
<dbReference type="GO" id="GO:0000281">
    <property type="term" value="P:mitotic cytokinesis"/>
    <property type="evidence" value="ECO:0000318"/>
    <property type="project" value="GO_Central"/>
</dbReference>
<dbReference type="InterPro" id="IPR026756">
    <property type="entry name" value="NuSAP"/>
</dbReference>
<dbReference type="PANTHER" id="PTHR15874">
    <property type="entry name" value="NUCLEOLAR AND SPINDLE-ASSOCIATED PROTEIN 1"/>
    <property type="match status" value="1"/>
</dbReference>
<dbReference type="PANTHER" id="PTHR15874:SF1">
    <property type="entry name" value="NUCLEOLAR AND SPINDLE-ASSOCIATED PROTEIN 1"/>
    <property type="match status" value="1"/>
</dbReference>
<dbReference type="Pfam" id="PF16006">
    <property type="entry name" value="NUSAP"/>
    <property type="match status" value="2"/>
</dbReference>
<feature type="chain" id="PRO_0000302038" description="Nucleolar and spindle-associated protein 1-A">
    <location>
        <begin position="1"/>
        <end position="525"/>
    </location>
</feature>
<feature type="region of interest" description="Disordered" evidence="2">
    <location>
        <begin position="46"/>
        <end position="205"/>
    </location>
</feature>
<feature type="region of interest" description="Disordered" evidence="2">
    <location>
        <begin position="248"/>
        <end position="292"/>
    </location>
</feature>
<feature type="region of interest" description="Disordered" evidence="2">
    <location>
        <begin position="373"/>
        <end position="397"/>
    </location>
</feature>
<feature type="region of interest" description="Disordered" evidence="2">
    <location>
        <begin position="451"/>
        <end position="525"/>
    </location>
</feature>
<feature type="compositionally biased region" description="Polar residues" evidence="2">
    <location>
        <begin position="58"/>
        <end position="69"/>
    </location>
</feature>
<feature type="compositionally biased region" description="Basic residues" evidence="2">
    <location>
        <begin position="82"/>
        <end position="92"/>
    </location>
</feature>
<feature type="compositionally biased region" description="Polar residues" evidence="2">
    <location>
        <begin position="106"/>
        <end position="127"/>
    </location>
</feature>
<feature type="compositionally biased region" description="Basic and acidic residues" evidence="2">
    <location>
        <begin position="160"/>
        <end position="169"/>
    </location>
</feature>
<feature type="compositionally biased region" description="Polar residues" evidence="2">
    <location>
        <begin position="270"/>
        <end position="285"/>
    </location>
</feature>
<feature type="compositionally biased region" description="Polar residues" evidence="2">
    <location>
        <begin position="476"/>
        <end position="494"/>
    </location>
</feature>
<feature type="compositionally biased region" description="Basic and acidic residues" evidence="2">
    <location>
        <begin position="495"/>
        <end position="514"/>
    </location>
</feature>
<evidence type="ECO:0000250" key="1"/>
<evidence type="ECO:0000256" key="2">
    <source>
        <dbReference type="SAM" id="MobiDB-lite"/>
    </source>
</evidence>
<evidence type="ECO:0000269" key="3">
    <source>
    </source>
</evidence>
<evidence type="ECO:0000305" key="4"/>
<accession>Q1W1G1</accession>
<reference key="1">
    <citation type="journal article" date="2006" name="Mol. Biol. Cell">
        <title>NuSAP, a mitotic RanGTP target that stabilizes and cross-links microtubules.</title>
        <authorList>
            <person name="Ribbeck K."/>
            <person name="Groen A.C."/>
            <person name="Santarella R."/>
            <person name="Bohnsack M.T."/>
            <person name="Raemaekers T."/>
            <person name="Koecher T."/>
            <person name="Gentzel M."/>
            <person name="Goerlich D."/>
            <person name="Wilm M."/>
            <person name="Carmeliet G."/>
            <person name="Mitchison T.J."/>
            <person name="Ellenberg J."/>
            <person name="Hoenger A."/>
            <person name="Mattaj I.W."/>
        </authorList>
    </citation>
    <scope>NUCLEOTIDE SEQUENCE [MRNA]</scope>
    <scope>FUNCTION</scope>
    <scope>INTERACTION WITH IPO7; KPNA2 AND KPNB1</scope>
    <scope>ASSOCIATION WITH MICROTUBULES</scope>
    <scope>SUBCELLULAR LOCATION</scope>
</reference>
<proteinExistence type="evidence at protein level"/>
<sequence>MEAPTLSELEGLRYSELQKLAKTAGLKANLKADKLLKALKVHFYPESKDESPDYDGGSSLTDTDELNSSQEKDEPVSVSFVTHRRGRGRKPLKNYDTPKDEFLTVSVGTGTESLASETDNTQDQNCLESKKKKVSPPTIDNKHRKRSRSEDTSKQNNSETTEKRQKKASDITSVPSAGKIPRYAGRLSKPESKPSTPNFKKLHEAHFKKMESIDKYMERKQKRLDTVSSSIQEMKMLTKKSNLLKLVEKTPVSDIKKPVKSRLSLLSSLPPTTGASPSRTPTNQRRSGRFSAANKSILFDRSGFKPSVLSSSKMNVRFSEATKDNEHKRSLIKTPARKSSSFLAITPESEPRQMLPNVKKTPARKSLSVLAVTPESEPKQMLPSVKKNEPMATPEKAKKTDLNTTIQPSTVILESTCPQNKEIAITPFKFTAQTTETPNTNKKGRFDLQASLSRPLGYQPHKGKLKPWGGSEENKCGSNNNVSVLKNNFKQPHLQTREDRRKQHEQDRKGKRDQTLGTRRGVPVQ</sequence>
<protein>
    <recommendedName>
        <fullName>Nucleolar and spindle-associated protein 1-A</fullName>
        <shortName>NuSAP A</shortName>
    </recommendedName>
</protein>
<gene>
    <name type="primary">nusap1-a</name>
</gene>
<keyword id="KW-0131">Cell cycle</keyword>
<keyword id="KW-0132">Cell division</keyword>
<keyword id="KW-0963">Cytoplasm</keyword>
<keyword id="KW-0206">Cytoskeleton</keyword>
<keyword id="KW-0238">DNA-binding</keyword>
<keyword id="KW-0469">Meiosis</keyword>
<keyword id="KW-0493">Microtubule</keyword>
<keyword id="KW-0498">Mitosis</keyword>
<keyword id="KW-0539">Nucleus</keyword>
<keyword id="KW-1185">Reference proteome</keyword>
<comment type="function">
    <text evidence="3">Microtubule-associated protein with the capacity to bundle and stabilize microtubules. May associate with chromosomes and promote the organization of meiotic or mitotic spindle microtubules around them.</text>
</comment>
<comment type="subunit">
    <text evidence="1 3">Interacts with DNA (By similarity). Interacts with microtubules, ipo7, kpna2 and kpnb1. Microtubule stabilization is inhibited by ipo7 and kpna2, while microtubule bundling is inhibited by kpnb1. Active GTP-bound ran causes dissociation of ipo7 and kpnb1.</text>
</comment>
<comment type="subcellular location">
    <subcellularLocation>
        <location evidence="3">Cytoplasm</location>
    </subcellularLocation>
    <subcellularLocation>
        <location evidence="3">Nucleus</location>
    </subcellularLocation>
    <subcellularLocation>
        <location evidence="3">Cytoplasm</location>
        <location evidence="3">Cytoskeleton</location>
        <location evidence="3">Spindle</location>
    </subcellularLocation>
    <text>Associates with meiotic spindle microtubules, particularly in the vicinity of chromosomes. May also associate with mitotic spindle microtubules.</text>
</comment>
<comment type="similarity">
    <text evidence="4">Belongs to the NUSAP family.</text>
</comment>
<organism>
    <name type="scientific">Xenopus laevis</name>
    <name type="common">African clawed frog</name>
    <dbReference type="NCBI Taxonomy" id="8355"/>
    <lineage>
        <taxon>Eukaryota</taxon>
        <taxon>Metazoa</taxon>
        <taxon>Chordata</taxon>
        <taxon>Craniata</taxon>
        <taxon>Vertebrata</taxon>
        <taxon>Euteleostomi</taxon>
        <taxon>Amphibia</taxon>
        <taxon>Batrachia</taxon>
        <taxon>Anura</taxon>
        <taxon>Pipoidea</taxon>
        <taxon>Pipidae</taxon>
        <taxon>Xenopodinae</taxon>
        <taxon>Xenopus</taxon>
        <taxon>Xenopus</taxon>
    </lineage>
</organism>
<name>NSAPA_XENLA</name>